<sequence length="122" mass="13120">MIQQESRLKVADNSGARELLTIKVLGGSGRKYANIGDIIVATVKQATPGGVVKKGDVVKAVVVRTKSGARRPDGSYIKFDENAAVIIKDDKSPRGTRIFGPVARELRDSNFMKIVSLAPEVL</sequence>
<evidence type="ECO:0000255" key="1">
    <source>
        <dbReference type="HAMAP-Rule" id="MF_01367"/>
    </source>
</evidence>
<evidence type="ECO:0000305" key="2"/>
<gene>
    <name evidence="1" type="primary">rplN</name>
    <name type="ordered locus">BAMEG_0136</name>
</gene>
<accession>C3LJ92</accession>
<dbReference type="EMBL" id="CP001215">
    <property type="protein sequence ID" value="ACP15021.1"/>
    <property type="molecule type" value="Genomic_DNA"/>
</dbReference>
<dbReference type="RefSeq" id="WP_000615912.1">
    <property type="nucleotide sequence ID" value="NC_012581.1"/>
</dbReference>
<dbReference type="SMR" id="C3LJ92"/>
<dbReference type="GeneID" id="93010933"/>
<dbReference type="KEGG" id="bah:BAMEG_0136"/>
<dbReference type="HOGENOM" id="CLU_095071_2_1_9"/>
<dbReference type="GO" id="GO:0022625">
    <property type="term" value="C:cytosolic large ribosomal subunit"/>
    <property type="evidence" value="ECO:0007669"/>
    <property type="project" value="TreeGrafter"/>
</dbReference>
<dbReference type="GO" id="GO:0070180">
    <property type="term" value="F:large ribosomal subunit rRNA binding"/>
    <property type="evidence" value="ECO:0007669"/>
    <property type="project" value="TreeGrafter"/>
</dbReference>
<dbReference type="GO" id="GO:0003735">
    <property type="term" value="F:structural constituent of ribosome"/>
    <property type="evidence" value="ECO:0007669"/>
    <property type="project" value="InterPro"/>
</dbReference>
<dbReference type="GO" id="GO:0006412">
    <property type="term" value="P:translation"/>
    <property type="evidence" value="ECO:0007669"/>
    <property type="project" value="UniProtKB-UniRule"/>
</dbReference>
<dbReference type="CDD" id="cd00337">
    <property type="entry name" value="Ribosomal_uL14"/>
    <property type="match status" value="1"/>
</dbReference>
<dbReference type="FunFam" id="2.40.150.20:FF:000001">
    <property type="entry name" value="50S ribosomal protein L14"/>
    <property type="match status" value="1"/>
</dbReference>
<dbReference type="Gene3D" id="2.40.150.20">
    <property type="entry name" value="Ribosomal protein L14"/>
    <property type="match status" value="1"/>
</dbReference>
<dbReference type="HAMAP" id="MF_01367">
    <property type="entry name" value="Ribosomal_uL14"/>
    <property type="match status" value="1"/>
</dbReference>
<dbReference type="InterPro" id="IPR000218">
    <property type="entry name" value="Ribosomal_uL14"/>
</dbReference>
<dbReference type="InterPro" id="IPR005745">
    <property type="entry name" value="Ribosomal_uL14_bac-type"/>
</dbReference>
<dbReference type="InterPro" id="IPR019972">
    <property type="entry name" value="Ribosomal_uL14_CS"/>
</dbReference>
<dbReference type="InterPro" id="IPR036853">
    <property type="entry name" value="Ribosomal_uL14_sf"/>
</dbReference>
<dbReference type="NCBIfam" id="TIGR01067">
    <property type="entry name" value="rplN_bact"/>
    <property type="match status" value="1"/>
</dbReference>
<dbReference type="PANTHER" id="PTHR11761">
    <property type="entry name" value="50S/60S RIBOSOMAL PROTEIN L14/L23"/>
    <property type="match status" value="1"/>
</dbReference>
<dbReference type="PANTHER" id="PTHR11761:SF3">
    <property type="entry name" value="LARGE RIBOSOMAL SUBUNIT PROTEIN UL14M"/>
    <property type="match status" value="1"/>
</dbReference>
<dbReference type="Pfam" id="PF00238">
    <property type="entry name" value="Ribosomal_L14"/>
    <property type="match status" value="1"/>
</dbReference>
<dbReference type="SMART" id="SM01374">
    <property type="entry name" value="Ribosomal_L14"/>
    <property type="match status" value="1"/>
</dbReference>
<dbReference type="SUPFAM" id="SSF50193">
    <property type="entry name" value="Ribosomal protein L14"/>
    <property type="match status" value="1"/>
</dbReference>
<dbReference type="PROSITE" id="PS00049">
    <property type="entry name" value="RIBOSOMAL_L14"/>
    <property type="match status" value="1"/>
</dbReference>
<comment type="function">
    <text evidence="1">Binds to 23S rRNA. Forms part of two intersubunit bridges in the 70S ribosome.</text>
</comment>
<comment type="subunit">
    <text evidence="1">Part of the 50S ribosomal subunit. Forms a cluster with proteins L3 and L19. In the 70S ribosome, L14 and L19 interact and together make contacts with the 16S rRNA in bridges B5 and B8.</text>
</comment>
<comment type="similarity">
    <text evidence="1">Belongs to the universal ribosomal protein uL14 family.</text>
</comment>
<feature type="chain" id="PRO_1000166896" description="Large ribosomal subunit protein uL14">
    <location>
        <begin position="1"/>
        <end position="122"/>
    </location>
</feature>
<protein>
    <recommendedName>
        <fullName evidence="1">Large ribosomal subunit protein uL14</fullName>
    </recommendedName>
    <alternativeName>
        <fullName evidence="2">50S ribosomal protein L14</fullName>
    </alternativeName>
</protein>
<name>RL14_BACAC</name>
<keyword id="KW-0687">Ribonucleoprotein</keyword>
<keyword id="KW-0689">Ribosomal protein</keyword>
<keyword id="KW-0694">RNA-binding</keyword>
<keyword id="KW-0699">rRNA-binding</keyword>
<organism>
    <name type="scientific">Bacillus anthracis (strain CDC 684 / NRRL 3495)</name>
    <dbReference type="NCBI Taxonomy" id="568206"/>
    <lineage>
        <taxon>Bacteria</taxon>
        <taxon>Bacillati</taxon>
        <taxon>Bacillota</taxon>
        <taxon>Bacilli</taxon>
        <taxon>Bacillales</taxon>
        <taxon>Bacillaceae</taxon>
        <taxon>Bacillus</taxon>
        <taxon>Bacillus cereus group</taxon>
    </lineage>
</organism>
<reference key="1">
    <citation type="submission" date="2008-10" db="EMBL/GenBank/DDBJ databases">
        <title>Genome sequence of Bacillus anthracis str. CDC 684.</title>
        <authorList>
            <person name="Dodson R.J."/>
            <person name="Munk A.C."/>
            <person name="Brettin T."/>
            <person name="Bruce D."/>
            <person name="Detter C."/>
            <person name="Tapia R."/>
            <person name="Han C."/>
            <person name="Sutton G."/>
            <person name="Sims D."/>
        </authorList>
    </citation>
    <scope>NUCLEOTIDE SEQUENCE [LARGE SCALE GENOMIC DNA]</scope>
    <source>
        <strain>CDC 684 / NRRL 3495</strain>
    </source>
</reference>
<proteinExistence type="inferred from homology"/>